<comment type="function">
    <text evidence="1">Converts heme B (protoheme IX) to heme O by substitution of the vinyl group on carbon 2 of heme B porphyrin ring with a hydroxyethyl farnesyl side group.</text>
</comment>
<comment type="catalytic activity">
    <reaction>
        <text>heme b + (2E,6E)-farnesyl diphosphate + H2O = Fe(II)-heme o + diphosphate</text>
        <dbReference type="Rhea" id="RHEA:28070"/>
        <dbReference type="ChEBI" id="CHEBI:15377"/>
        <dbReference type="ChEBI" id="CHEBI:33019"/>
        <dbReference type="ChEBI" id="CHEBI:60344"/>
        <dbReference type="ChEBI" id="CHEBI:60530"/>
        <dbReference type="ChEBI" id="CHEBI:175763"/>
        <dbReference type="EC" id="2.5.1.141"/>
    </reaction>
</comment>
<comment type="pathway">
    <text>Porphyrin-containing compound metabolism; heme O biosynthesis; heme O from protoheme: step 1/1.</text>
</comment>
<comment type="subcellular location">
    <subcellularLocation>
        <location evidence="4">Cell membrane</location>
        <topology evidence="4">Multi-pass membrane protein</topology>
    </subcellularLocation>
</comment>
<comment type="miscellaneous">
    <text evidence="1">Carbon 2 of the heme B porphyrin ring is defined according to the Fischer nomenclature.</text>
</comment>
<comment type="similarity">
    <text evidence="4">In the C-terminal section; belongs to the UbiA prenyltransferase family. Protoheme IX farnesyltransferase subfamily.</text>
</comment>
<reference key="1">
    <citation type="journal article" date="2005" name="Genome Res.">
        <title>Living with two extremes: conclusions from the genome sequence of Natronomonas pharaonis.</title>
        <authorList>
            <person name="Falb M."/>
            <person name="Pfeiffer F."/>
            <person name="Palm P."/>
            <person name="Rodewald K."/>
            <person name="Hickmann V."/>
            <person name="Tittor J."/>
            <person name="Oesterhelt D."/>
        </authorList>
    </citation>
    <scope>NUCLEOTIDE SEQUENCE [LARGE SCALE GENOMIC DNA]</scope>
    <source>
        <strain>ATCC 35678 / DSM 2160 / CIP 103997 / JCM 8858 / NBRC 14720 / NCIMB 2260 / Gabara</strain>
    </source>
</reference>
<evidence type="ECO:0000250" key="1"/>
<evidence type="ECO:0000255" key="2"/>
<evidence type="ECO:0000256" key="3">
    <source>
        <dbReference type="SAM" id="MobiDB-lite"/>
    </source>
</evidence>
<evidence type="ECO:0000305" key="4"/>
<dbReference type="EC" id="2.5.1.141"/>
<dbReference type="EMBL" id="CR936257">
    <property type="protein sequence ID" value="CAI49314.1"/>
    <property type="molecule type" value="Genomic_DNA"/>
</dbReference>
<dbReference type="RefSeq" id="WP_011322940.1">
    <property type="nucleotide sequence ID" value="NC_007426.1"/>
</dbReference>
<dbReference type="SMR" id="Q3IRC9"/>
<dbReference type="STRING" id="348780.NP_2446A"/>
<dbReference type="EnsemblBacteria" id="CAI49314">
    <property type="protein sequence ID" value="CAI49314"/>
    <property type="gene ID" value="NP_2446A"/>
</dbReference>
<dbReference type="GeneID" id="3702642"/>
<dbReference type="KEGG" id="nph:NP_2446A"/>
<dbReference type="eggNOG" id="arCOG00479">
    <property type="taxonomic scope" value="Archaea"/>
</dbReference>
<dbReference type="HOGENOM" id="CLU_030009_1_1_2"/>
<dbReference type="OrthoDB" id="131615at2157"/>
<dbReference type="UniPathway" id="UPA00834">
    <property type="reaction ID" value="UER00712"/>
</dbReference>
<dbReference type="Proteomes" id="UP000002698">
    <property type="component" value="Chromosome"/>
</dbReference>
<dbReference type="GO" id="GO:0005886">
    <property type="term" value="C:plasma membrane"/>
    <property type="evidence" value="ECO:0007669"/>
    <property type="project" value="UniProtKB-SubCell"/>
</dbReference>
<dbReference type="GO" id="GO:0008495">
    <property type="term" value="F:protoheme IX farnesyltransferase activity"/>
    <property type="evidence" value="ECO:0007669"/>
    <property type="project" value="UniProtKB-UniRule"/>
</dbReference>
<dbReference type="GO" id="GO:0048034">
    <property type="term" value="P:heme O biosynthetic process"/>
    <property type="evidence" value="ECO:0007669"/>
    <property type="project" value="UniProtKB-UniRule"/>
</dbReference>
<dbReference type="CDD" id="cd13957">
    <property type="entry name" value="PT_UbiA_Cox10"/>
    <property type="match status" value="1"/>
</dbReference>
<dbReference type="Gene3D" id="1.10.357.140">
    <property type="entry name" value="UbiA prenyltransferase"/>
    <property type="match status" value="1"/>
</dbReference>
<dbReference type="Gene3D" id="1.20.120.1780">
    <property type="entry name" value="UbiA prenyltransferase"/>
    <property type="match status" value="1"/>
</dbReference>
<dbReference type="HAMAP" id="MF_00154">
    <property type="entry name" value="CyoE_CtaB"/>
    <property type="match status" value="1"/>
</dbReference>
<dbReference type="InterPro" id="IPR006369">
    <property type="entry name" value="Protohaem_IX_farnesylTrfase"/>
</dbReference>
<dbReference type="InterPro" id="IPR000537">
    <property type="entry name" value="UbiA_prenyltransferase"/>
</dbReference>
<dbReference type="InterPro" id="IPR044878">
    <property type="entry name" value="UbiA_sf"/>
</dbReference>
<dbReference type="NCBIfam" id="TIGR01473">
    <property type="entry name" value="cyoE_ctaB"/>
    <property type="match status" value="1"/>
</dbReference>
<dbReference type="NCBIfam" id="NF003349">
    <property type="entry name" value="PRK04375.1-2"/>
    <property type="match status" value="1"/>
</dbReference>
<dbReference type="PANTHER" id="PTHR43448">
    <property type="entry name" value="PROTOHEME IX FARNESYLTRANSFERASE, MITOCHONDRIAL"/>
    <property type="match status" value="1"/>
</dbReference>
<dbReference type="PANTHER" id="PTHR43448:SF2">
    <property type="entry name" value="PROTOHEME IX FARNESYLTRANSFERASE, MITOCHONDRIAL"/>
    <property type="match status" value="1"/>
</dbReference>
<dbReference type="Pfam" id="PF01040">
    <property type="entry name" value="UbiA"/>
    <property type="match status" value="1"/>
</dbReference>
<accession>Q3IRC9</accession>
<name>COXX1_NATPD</name>
<feature type="chain" id="PRO_0000327204" description="Protoheme IX farnesyltransferase 1">
    <location>
        <begin position="1"/>
        <end position="454"/>
    </location>
</feature>
<feature type="transmembrane region" description="Helical" evidence="2">
    <location>
        <begin position="9"/>
        <end position="29"/>
    </location>
</feature>
<feature type="transmembrane region" description="Helical" evidence="2">
    <location>
        <begin position="59"/>
        <end position="79"/>
    </location>
</feature>
<feature type="transmembrane region" description="Helical" evidence="2">
    <location>
        <begin position="87"/>
        <end position="107"/>
    </location>
</feature>
<feature type="transmembrane region" description="Helical" evidence="2">
    <location>
        <begin position="113"/>
        <end position="133"/>
    </location>
</feature>
<feature type="transmembrane region" description="Helical" evidence="2">
    <location>
        <begin position="186"/>
        <end position="206"/>
    </location>
</feature>
<feature type="transmembrane region" description="Helical" evidence="2">
    <location>
        <begin position="209"/>
        <end position="229"/>
    </location>
</feature>
<feature type="transmembrane region" description="Helical" evidence="2">
    <location>
        <begin position="251"/>
        <end position="271"/>
    </location>
</feature>
<feature type="transmembrane region" description="Helical" evidence="2">
    <location>
        <begin position="276"/>
        <end position="296"/>
    </location>
</feature>
<feature type="transmembrane region" description="Helical" evidence="2">
    <location>
        <begin position="300"/>
        <end position="320"/>
    </location>
</feature>
<feature type="transmembrane region" description="Helical" evidence="2">
    <location>
        <begin position="321"/>
        <end position="341"/>
    </location>
</feature>
<feature type="transmembrane region" description="Helical" evidence="2">
    <location>
        <begin position="377"/>
        <end position="397"/>
    </location>
</feature>
<feature type="transmembrane region" description="Helical" evidence="2">
    <location>
        <begin position="398"/>
        <end position="418"/>
    </location>
</feature>
<feature type="transmembrane region" description="Helical" evidence="2">
    <location>
        <begin position="433"/>
        <end position="453"/>
    </location>
</feature>
<feature type="region of interest" description="Unknown">
    <location>
        <begin position="1"/>
        <end position="186"/>
    </location>
</feature>
<feature type="region of interest" description="Disordered" evidence="3">
    <location>
        <begin position="137"/>
        <end position="164"/>
    </location>
</feature>
<feature type="region of interest" description="Protoheme IX prenyltransferase">
    <location>
        <begin position="187"/>
        <end position="451"/>
    </location>
</feature>
<proteinExistence type="inferred from homology"/>
<sequence>MRTTGFSGLLSATVVGVYVLVVVGATAALADAAAACQGWPLCGGDLSDPSVPVAVLHRGVAAVVGLLVIATAVVGWSETTARVKTTLALALALYPAQVVLGALVATGSALANLHLFVAMAIFAVLVVGLAWHLEAETGSDDAPESPPELAPPVDEEPAATEQPALSGLARAKATARAYFELTKPRLMWLLCLVAGAGMVIAGTPTVRTVVFTLGGGVLAIGASGTFNHVLERDIDRRMERTSDRPIATHEVPVANALAFGGLLAVASLWAFLSVNLLAAALGLAAIAFYSVVYTLILKPNTVQNTVIGGAAGALPALIGYAAVTGTIGIGGLVLAAVIFLWTPAHFYNLALAYKDDYERGGFPMMPVVRGETETRKHIVFYLGATLLGAGALAAVTDLGWLYAATAVLAAGVFLWAVVELHYEQTDRAAFRSFHASNAYLGLVLVAILIDSLAV</sequence>
<keyword id="KW-1003">Cell membrane</keyword>
<keyword id="KW-0350">Heme biosynthesis</keyword>
<keyword id="KW-0472">Membrane</keyword>
<keyword id="KW-1185">Reference proteome</keyword>
<keyword id="KW-0808">Transferase</keyword>
<keyword id="KW-0812">Transmembrane</keyword>
<keyword id="KW-1133">Transmembrane helix</keyword>
<protein>
    <recommendedName>
        <fullName>Protoheme IX farnesyltransferase 1</fullName>
        <ecNumber>2.5.1.141</ecNumber>
    </recommendedName>
    <alternativeName>
        <fullName>Heme B farnesyltransferase 1</fullName>
    </alternativeName>
    <alternativeName>
        <fullName>Heme O synthase 1</fullName>
    </alternativeName>
</protein>
<organism>
    <name type="scientific">Natronomonas pharaonis (strain ATCC 35678 / DSM 2160 / CIP 103997 / JCM 8858 / NBRC 14720 / NCIMB 2260 / Gabara)</name>
    <name type="common">Halobacterium pharaonis</name>
    <dbReference type="NCBI Taxonomy" id="348780"/>
    <lineage>
        <taxon>Archaea</taxon>
        <taxon>Methanobacteriati</taxon>
        <taxon>Methanobacteriota</taxon>
        <taxon>Stenosarchaea group</taxon>
        <taxon>Halobacteria</taxon>
        <taxon>Halobacteriales</taxon>
        <taxon>Haloarculaceae</taxon>
        <taxon>Natronomonas</taxon>
    </lineage>
</organism>
<gene>
    <name type="primary">ctaB1</name>
    <name type="ordered locus">NP_2446A</name>
</gene>